<evidence type="ECO:0000250" key="1">
    <source>
        <dbReference type="UniProtKB" id="Q8CFD0"/>
    </source>
</evidence>
<evidence type="ECO:0000250" key="2">
    <source>
        <dbReference type="UniProtKB" id="Q925N0"/>
    </source>
</evidence>
<evidence type="ECO:0000250" key="3">
    <source>
        <dbReference type="UniProtKB" id="Q9H9B4"/>
    </source>
</evidence>
<evidence type="ECO:0000255" key="4"/>
<evidence type="ECO:0000269" key="5">
    <source>
    </source>
</evidence>
<evidence type="ECO:0000269" key="6">
    <source>
    </source>
</evidence>
<evidence type="ECO:0000303" key="7">
    <source>
    </source>
</evidence>
<evidence type="ECO:0000305" key="8"/>
<evidence type="ECO:0000312" key="9">
    <source>
        <dbReference type="HGNC" id="HGNC:16073"/>
    </source>
</evidence>
<protein>
    <recommendedName>
        <fullName evidence="7">Sideroflexin-5</fullName>
    </recommendedName>
</protein>
<organism>
    <name type="scientific">Homo sapiens</name>
    <name type="common">Human</name>
    <dbReference type="NCBI Taxonomy" id="9606"/>
    <lineage>
        <taxon>Eukaryota</taxon>
        <taxon>Metazoa</taxon>
        <taxon>Chordata</taxon>
        <taxon>Craniata</taxon>
        <taxon>Vertebrata</taxon>
        <taxon>Euteleostomi</taxon>
        <taxon>Mammalia</taxon>
        <taxon>Eutheria</taxon>
        <taxon>Euarchontoglires</taxon>
        <taxon>Primates</taxon>
        <taxon>Haplorrhini</taxon>
        <taxon>Catarrhini</taxon>
        <taxon>Hominidae</taxon>
        <taxon>Homo</taxon>
    </lineage>
</organism>
<feature type="chain" id="PRO_0000177043" description="Sideroflexin-5">
    <location>
        <begin position="1"/>
        <end position="340"/>
    </location>
</feature>
<feature type="transmembrane region" description="Helical" evidence="4">
    <location>
        <begin position="103"/>
        <end position="123"/>
    </location>
</feature>
<feature type="transmembrane region" description="Helical" evidence="4">
    <location>
        <begin position="163"/>
        <end position="183"/>
    </location>
</feature>
<feature type="transmembrane region" description="Helical" evidence="4">
    <location>
        <begin position="254"/>
        <end position="274"/>
    </location>
</feature>
<feature type="transmembrane region" description="Helical" evidence="4">
    <location>
        <begin position="287"/>
        <end position="307"/>
    </location>
</feature>
<sequence length="340" mass="37124">MADTATTASAAAASAASASSDAPPFQLGKPRFQQTSFYGRFRHFLDIIDPRTLFVTERRLREAVQLLEDYKHGTLRPGVTNEQLWSAQKIKQAILHPDTNEKIFMPFRMSGYIPFGTPIVVGLLLPNQTLASTVFWQWLNQSHNACVNYANRNATKPSPASKFIQGYLGAVISAVSIAVGLNVLVQKANKFTPATRLLIQRFVPFPAVASANICNVVLMRYGELEEGIDVLDSDGNLVGSSKIAARHALLETALTRVVLPMPILVLPPIVMSMLEKTALLQARPRLLLPVQSLVCLAAFGLALPLAISLFPQMSEIETSQLEPEIAQATSSRTVVYNKGL</sequence>
<keyword id="KW-0029">Amino-acid transport</keyword>
<keyword id="KW-0472">Membrane</keyword>
<keyword id="KW-0496">Mitochondrion</keyword>
<keyword id="KW-0999">Mitochondrion inner membrane</keyword>
<keyword id="KW-1267">Proteomics identification</keyword>
<keyword id="KW-1185">Reference proteome</keyword>
<keyword id="KW-0812">Transmembrane</keyword>
<keyword id="KW-1133">Transmembrane helix</keyword>
<keyword id="KW-0813">Transport</keyword>
<proteinExistence type="evidence at protein level"/>
<reference key="1">
    <citation type="journal article" date="2002" name="Gene">
        <title>The human sideroflexin 5 (SFXN5) gene: sequence, expression analysis and exclusion as a candidate for PARK3.</title>
        <authorList>
            <person name="Lockhart P.J."/>
            <person name="Holtom B."/>
            <person name="Lincoln S."/>
            <person name="Hussey J."/>
            <person name="Zimprich A."/>
            <person name="Gasser T."/>
            <person name="Wszolek Z.K."/>
            <person name="Hardy J."/>
            <person name="Farrer M.J."/>
        </authorList>
    </citation>
    <scope>NUCLEOTIDE SEQUENCE [MRNA]</scope>
    <scope>TISSUE SPECIFICITY</scope>
</reference>
<reference key="2">
    <citation type="journal article" date="2004" name="Nat. Genet.">
        <title>Complete sequencing and characterization of 21,243 full-length human cDNAs.</title>
        <authorList>
            <person name="Ota T."/>
            <person name="Suzuki Y."/>
            <person name="Nishikawa T."/>
            <person name="Otsuki T."/>
            <person name="Sugiyama T."/>
            <person name="Irie R."/>
            <person name="Wakamatsu A."/>
            <person name="Hayashi K."/>
            <person name="Sato H."/>
            <person name="Nagai K."/>
            <person name="Kimura K."/>
            <person name="Makita H."/>
            <person name="Sekine M."/>
            <person name="Obayashi M."/>
            <person name="Nishi T."/>
            <person name="Shibahara T."/>
            <person name="Tanaka T."/>
            <person name="Ishii S."/>
            <person name="Yamamoto J."/>
            <person name="Saito K."/>
            <person name="Kawai Y."/>
            <person name="Isono Y."/>
            <person name="Nakamura Y."/>
            <person name="Nagahari K."/>
            <person name="Murakami K."/>
            <person name="Yasuda T."/>
            <person name="Iwayanagi T."/>
            <person name="Wagatsuma M."/>
            <person name="Shiratori A."/>
            <person name="Sudo H."/>
            <person name="Hosoiri T."/>
            <person name="Kaku Y."/>
            <person name="Kodaira H."/>
            <person name="Kondo H."/>
            <person name="Sugawara M."/>
            <person name="Takahashi M."/>
            <person name="Kanda K."/>
            <person name="Yokoi T."/>
            <person name="Furuya T."/>
            <person name="Kikkawa E."/>
            <person name="Omura Y."/>
            <person name="Abe K."/>
            <person name="Kamihara K."/>
            <person name="Katsuta N."/>
            <person name="Sato K."/>
            <person name="Tanikawa M."/>
            <person name="Yamazaki M."/>
            <person name="Ninomiya K."/>
            <person name="Ishibashi T."/>
            <person name="Yamashita H."/>
            <person name="Murakawa K."/>
            <person name="Fujimori K."/>
            <person name="Tanai H."/>
            <person name="Kimata M."/>
            <person name="Watanabe M."/>
            <person name="Hiraoka S."/>
            <person name="Chiba Y."/>
            <person name="Ishida S."/>
            <person name="Ono Y."/>
            <person name="Takiguchi S."/>
            <person name="Watanabe S."/>
            <person name="Yosida M."/>
            <person name="Hotuta T."/>
            <person name="Kusano J."/>
            <person name="Kanehori K."/>
            <person name="Takahashi-Fujii A."/>
            <person name="Hara H."/>
            <person name="Tanase T.-O."/>
            <person name="Nomura Y."/>
            <person name="Togiya S."/>
            <person name="Komai F."/>
            <person name="Hara R."/>
            <person name="Takeuchi K."/>
            <person name="Arita M."/>
            <person name="Imose N."/>
            <person name="Musashino K."/>
            <person name="Yuuki H."/>
            <person name="Oshima A."/>
            <person name="Sasaki N."/>
            <person name="Aotsuka S."/>
            <person name="Yoshikawa Y."/>
            <person name="Matsunawa H."/>
            <person name="Ichihara T."/>
            <person name="Shiohata N."/>
            <person name="Sano S."/>
            <person name="Moriya S."/>
            <person name="Momiyama H."/>
            <person name="Satoh N."/>
            <person name="Takami S."/>
            <person name="Terashima Y."/>
            <person name="Suzuki O."/>
            <person name="Nakagawa S."/>
            <person name="Senoh A."/>
            <person name="Mizoguchi H."/>
            <person name="Goto Y."/>
            <person name="Shimizu F."/>
            <person name="Wakebe H."/>
            <person name="Hishigaki H."/>
            <person name="Watanabe T."/>
            <person name="Sugiyama A."/>
            <person name="Takemoto M."/>
            <person name="Kawakami B."/>
            <person name="Yamazaki M."/>
            <person name="Watanabe K."/>
            <person name="Kumagai A."/>
            <person name="Itakura S."/>
            <person name="Fukuzumi Y."/>
            <person name="Fujimori Y."/>
            <person name="Komiyama M."/>
            <person name="Tashiro H."/>
            <person name="Tanigami A."/>
            <person name="Fujiwara T."/>
            <person name="Ono T."/>
            <person name="Yamada K."/>
            <person name="Fujii Y."/>
            <person name="Ozaki K."/>
            <person name="Hirao M."/>
            <person name="Ohmori Y."/>
            <person name="Kawabata A."/>
            <person name="Hikiji T."/>
            <person name="Kobatake N."/>
            <person name="Inagaki H."/>
            <person name="Ikema Y."/>
            <person name="Okamoto S."/>
            <person name="Okitani R."/>
            <person name="Kawakami T."/>
            <person name="Noguchi S."/>
            <person name="Itoh T."/>
            <person name="Shigeta K."/>
            <person name="Senba T."/>
            <person name="Matsumura K."/>
            <person name="Nakajima Y."/>
            <person name="Mizuno T."/>
            <person name="Morinaga M."/>
            <person name="Sasaki M."/>
            <person name="Togashi T."/>
            <person name="Oyama M."/>
            <person name="Hata H."/>
            <person name="Watanabe M."/>
            <person name="Komatsu T."/>
            <person name="Mizushima-Sugano J."/>
            <person name="Satoh T."/>
            <person name="Shirai Y."/>
            <person name="Takahashi Y."/>
            <person name="Nakagawa K."/>
            <person name="Okumura K."/>
            <person name="Nagase T."/>
            <person name="Nomura N."/>
            <person name="Kikuchi H."/>
            <person name="Masuho Y."/>
            <person name="Yamashita R."/>
            <person name="Nakai K."/>
            <person name="Yada T."/>
            <person name="Nakamura Y."/>
            <person name="Ohara O."/>
            <person name="Isogai T."/>
            <person name="Sugano S."/>
        </authorList>
    </citation>
    <scope>NUCLEOTIDE SEQUENCE [LARGE SCALE MRNA]</scope>
    <source>
        <tissue>Brain</tissue>
    </source>
</reference>
<reference key="3">
    <citation type="journal article" date="2005" name="Nature">
        <title>Generation and annotation of the DNA sequences of human chromosomes 2 and 4.</title>
        <authorList>
            <person name="Hillier L.W."/>
            <person name="Graves T.A."/>
            <person name="Fulton R.S."/>
            <person name="Fulton L.A."/>
            <person name="Pepin K.H."/>
            <person name="Minx P."/>
            <person name="Wagner-McPherson C."/>
            <person name="Layman D."/>
            <person name="Wylie K."/>
            <person name="Sekhon M."/>
            <person name="Becker M.C."/>
            <person name="Fewell G.A."/>
            <person name="Delehaunty K.D."/>
            <person name="Miner T.L."/>
            <person name="Nash W.E."/>
            <person name="Kremitzki C."/>
            <person name="Oddy L."/>
            <person name="Du H."/>
            <person name="Sun H."/>
            <person name="Bradshaw-Cordum H."/>
            <person name="Ali J."/>
            <person name="Carter J."/>
            <person name="Cordes M."/>
            <person name="Harris A."/>
            <person name="Isak A."/>
            <person name="van Brunt A."/>
            <person name="Nguyen C."/>
            <person name="Du F."/>
            <person name="Courtney L."/>
            <person name="Kalicki J."/>
            <person name="Ozersky P."/>
            <person name="Abbott S."/>
            <person name="Armstrong J."/>
            <person name="Belter E.A."/>
            <person name="Caruso L."/>
            <person name="Cedroni M."/>
            <person name="Cotton M."/>
            <person name="Davidson T."/>
            <person name="Desai A."/>
            <person name="Elliott G."/>
            <person name="Erb T."/>
            <person name="Fronick C."/>
            <person name="Gaige T."/>
            <person name="Haakenson W."/>
            <person name="Haglund K."/>
            <person name="Holmes A."/>
            <person name="Harkins R."/>
            <person name="Kim K."/>
            <person name="Kruchowski S.S."/>
            <person name="Strong C.M."/>
            <person name="Grewal N."/>
            <person name="Goyea E."/>
            <person name="Hou S."/>
            <person name="Levy A."/>
            <person name="Martinka S."/>
            <person name="Mead K."/>
            <person name="McLellan M.D."/>
            <person name="Meyer R."/>
            <person name="Randall-Maher J."/>
            <person name="Tomlinson C."/>
            <person name="Dauphin-Kohlberg S."/>
            <person name="Kozlowicz-Reilly A."/>
            <person name="Shah N."/>
            <person name="Swearengen-Shahid S."/>
            <person name="Snider J."/>
            <person name="Strong J.T."/>
            <person name="Thompson J."/>
            <person name="Yoakum M."/>
            <person name="Leonard S."/>
            <person name="Pearman C."/>
            <person name="Trani L."/>
            <person name="Radionenko M."/>
            <person name="Waligorski J.E."/>
            <person name="Wang C."/>
            <person name="Rock S.M."/>
            <person name="Tin-Wollam A.-M."/>
            <person name="Maupin R."/>
            <person name="Latreille P."/>
            <person name="Wendl M.C."/>
            <person name="Yang S.-P."/>
            <person name="Pohl C."/>
            <person name="Wallis J.W."/>
            <person name="Spieth J."/>
            <person name="Bieri T.A."/>
            <person name="Berkowicz N."/>
            <person name="Nelson J.O."/>
            <person name="Osborne J."/>
            <person name="Ding L."/>
            <person name="Meyer R."/>
            <person name="Sabo A."/>
            <person name="Shotland Y."/>
            <person name="Sinha P."/>
            <person name="Wohldmann P.E."/>
            <person name="Cook L.L."/>
            <person name="Hickenbotham M.T."/>
            <person name="Eldred J."/>
            <person name="Williams D."/>
            <person name="Jones T.A."/>
            <person name="She X."/>
            <person name="Ciccarelli F.D."/>
            <person name="Izaurralde E."/>
            <person name="Taylor J."/>
            <person name="Schmutz J."/>
            <person name="Myers R.M."/>
            <person name="Cox D.R."/>
            <person name="Huang X."/>
            <person name="McPherson J.D."/>
            <person name="Mardis E.R."/>
            <person name="Clifton S.W."/>
            <person name="Warren W.C."/>
            <person name="Chinwalla A.T."/>
            <person name="Eddy S.R."/>
            <person name="Marra M.A."/>
            <person name="Ovcharenko I."/>
            <person name="Furey T.S."/>
            <person name="Miller W."/>
            <person name="Eichler E.E."/>
            <person name="Bork P."/>
            <person name="Suyama M."/>
            <person name="Torrents D."/>
            <person name="Waterston R.H."/>
            <person name="Wilson R.K."/>
        </authorList>
    </citation>
    <scope>NUCLEOTIDE SEQUENCE [LARGE SCALE GENOMIC DNA]</scope>
</reference>
<reference key="4">
    <citation type="submission" date="2005-09" db="EMBL/GenBank/DDBJ databases">
        <authorList>
            <person name="Mural R.J."/>
            <person name="Istrail S."/>
            <person name="Sutton G.G."/>
            <person name="Florea L."/>
            <person name="Halpern A.L."/>
            <person name="Mobarry C.M."/>
            <person name="Lippert R."/>
            <person name="Walenz B."/>
            <person name="Shatkay H."/>
            <person name="Dew I."/>
            <person name="Miller J.R."/>
            <person name="Flanigan M.J."/>
            <person name="Edwards N.J."/>
            <person name="Bolanos R."/>
            <person name="Fasulo D."/>
            <person name="Halldorsson B.V."/>
            <person name="Hannenhalli S."/>
            <person name="Turner R."/>
            <person name="Yooseph S."/>
            <person name="Lu F."/>
            <person name="Nusskern D.R."/>
            <person name="Shue B.C."/>
            <person name="Zheng X.H."/>
            <person name="Zhong F."/>
            <person name="Delcher A.L."/>
            <person name="Huson D.H."/>
            <person name="Kravitz S.A."/>
            <person name="Mouchard L."/>
            <person name="Reinert K."/>
            <person name="Remington K.A."/>
            <person name="Clark A.G."/>
            <person name="Waterman M.S."/>
            <person name="Eichler E.E."/>
            <person name="Adams M.D."/>
            <person name="Hunkapiller M.W."/>
            <person name="Myers E.W."/>
            <person name="Venter J.C."/>
        </authorList>
    </citation>
    <scope>NUCLEOTIDE SEQUENCE [LARGE SCALE GENOMIC DNA]</scope>
</reference>
<reference key="5">
    <citation type="journal article" date="2004" name="Genome Res.">
        <title>The status, quality, and expansion of the NIH full-length cDNA project: the Mammalian Gene Collection (MGC).</title>
        <authorList>
            <consortium name="The MGC Project Team"/>
        </authorList>
    </citation>
    <scope>NUCLEOTIDE SEQUENCE [LARGE SCALE MRNA]</scope>
</reference>
<reference key="6">
    <citation type="journal article" date="2014" name="J. Proteomics">
        <title>An enzyme assisted RP-RPLC approach for in-depth analysis of human liver phosphoproteome.</title>
        <authorList>
            <person name="Bian Y."/>
            <person name="Song C."/>
            <person name="Cheng K."/>
            <person name="Dong M."/>
            <person name="Wang F."/>
            <person name="Huang J."/>
            <person name="Sun D."/>
            <person name="Wang L."/>
            <person name="Ye M."/>
            <person name="Zou H."/>
        </authorList>
    </citation>
    <scope>IDENTIFICATION BY MASS SPECTROMETRY [LARGE SCALE ANALYSIS]</scope>
    <source>
        <tissue>Liver</tissue>
    </source>
</reference>
<reference key="7">
    <citation type="journal article" date="2018" name="Science">
        <title>SFXN1 is a mitochondrial serine transporter required for one-carbon metabolism.</title>
        <authorList>
            <person name="Kory N."/>
            <person name="Wyant G.A."/>
            <person name="Prakash G."/>
            <person name="Uit de Bos J."/>
            <person name="Bottanelli F."/>
            <person name="Pacold M.E."/>
            <person name="Chan S.H."/>
            <person name="Lewis C.A."/>
            <person name="Wang T."/>
            <person name="Keys H.R."/>
            <person name="Guo Y.E."/>
            <person name="Sabatini D.M."/>
        </authorList>
    </citation>
    <scope>FUNCTION</scope>
    <scope>SUBCELLULAR LOCATION</scope>
</reference>
<name>SFXN5_HUMAN</name>
<comment type="function">
    <text evidence="1 2 3 6">Mitochondrial amino-acid transporter (By similarity). Transports citrate (By similarity). Does not act as a serine transporter: not able to mediate transport of serine into mitochondria (By similarity) (PubMed:30442778). In brown adipose tissue, plays a role in the regulation of UCP1-dependent thermogenesis probably by supporting mitochondrial glycerol-3-phosphate utilization (By similarity).</text>
</comment>
<comment type="catalytic activity">
    <reaction evidence="1">
        <text>citrate(in) = citrate(out)</text>
        <dbReference type="Rhea" id="RHEA:33183"/>
        <dbReference type="ChEBI" id="CHEBI:16947"/>
    </reaction>
</comment>
<comment type="interaction">
    <interactant intactId="EBI-17274136">
        <id>Q8TD22</id>
    </interactant>
    <interactant intactId="EBI-4290634">
        <id>Q9BQE5</id>
        <label>APOL2</label>
    </interactant>
    <organismsDiffer>false</organismsDiffer>
    <experiments>3</experiments>
</comment>
<comment type="interaction">
    <interactant intactId="EBI-17274136">
        <id>Q8TD22</id>
    </interactant>
    <interactant intactId="EBI-13059134">
        <id>Q13520</id>
        <label>AQP6</label>
    </interactant>
    <organismsDiffer>false</organismsDiffer>
    <experiments>3</experiments>
</comment>
<comment type="interaction">
    <interactant intactId="EBI-17274136">
        <id>Q8TD22</id>
    </interactant>
    <interactant intactId="EBI-6942903">
        <id>Q96BA8</id>
        <label>CREB3L1</label>
    </interactant>
    <organismsDiffer>false</organismsDiffer>
    <experiments>3</experiments>
</comment>
<comment type="interaction">
    <interactant intactId="EBI-17274136">
        <id>Q8TD22</id>
    </interactant>
    <interactant intactId="EBI-3915253">
        <id>Q15125</id>
        <label>EBP</label>
    </interactant>
    <organismsDiffer>false</organismsDiffer>
    <experiments>3</experiments>
</comment>
<comment type="interaction">
    <interactant intactId="EBI-17274136">
        <id>Q8TD22</id>
    </interactant>
    <interactant intactId="EBI-781551">
        <id>Q9Y282</id>
        <label>ERGIC3</label>
    </interactant>
    <organismsDiffer>false</organismsDiffer>
    <experiments>4</experiments>
</comment>
<comment type="interaction">
    <interactant intactId="EBI-17274136">
        <id>Q8TD22</id>
    </interactant>
    <interactant intactId="EBI-1211440">
        <id>P27105</id>
        <label>STOM</label>
    </interactant>
    <organismsDiffer>false</organismsDiffer>
    <experiments>3</experiments>
</comment>
<comment type="interaction">
    <interactant intactId="EBI-17274136">
        <id>Q8TD22</id>
    </interactant>
    <interactant intactId="EBI-10982110">
        <id>Q96Q45-2</id>
        <label>TMEM237</label>
    </interactant>
    <organismsDiffer>false</organismsDiffer>
    <experiments>3</experiments>
</comment>
<comment type="interaction">
    <interactant intactId="EBI-17274136">
        <id>Q8TD22</id>
    </interactant>
    <interactant intactId="EBI-2548832">
        <id>Q8N661</id>
        <label>TMEM86B</label>
    </interactant>
    <organismsDiffer>false</organismsDiffer>
    <experiments>3</experiments>
</comment>
<comment type="interaction">
    <interactant intactId="EBI-17274136">
        <id>Q8TD22</id>
    </interactant>
    <interactant intactId="EBI-11724433">
        <id>Q6ZT21</id>
        <label>TMPPE</label>
    </interactant>
    <organismsDiffer>false</organismsDiffer>
    <experiments>3</experiments>
</comment>
<comment type="subcellular location">
    <subcellularLocation>
        <location evidence="6">Mitochondrion inner membrane</location>
        <topology evidence="4">Multi-pass membrane protein</topology>
    </subcellularLocation>
</comment>
<comment type="tissue specificity">
    <text evidence="5">Primarily expressed in the brain.</text>
</comment>
<comment type="similarity">
    <text evidence="8">Belongs to the sideroflexin family.</text>
</comment>
<gene>
    <name evidence="7 9" type="primary">SFXN5</name>
</gene>
<dbReference type="EMBL" id="AY044437">
    <property type="protein sequence ID" value="AAK95826.1"/>
    <property type="molecule type" value="mRNA"/>
</dbReference>
<dbReference type="EMBL" id="AK289731">
    <property type="protein sequence ID" value="BAF82420.1"/>
    <property type="molecule type" value="mRNA"/>
</dbReference>
<dbReference type="EMBL" id="AC012366">
    <property type="protein sequence ID" value="AAY14745.1"/>
    <property type="molecule type" value="Genomic_DNA"/>
</dbReference>
<dbReference type="EMBL" id="CH471053">
    <property type="protein sequence ID" value="EAW99754.1"/>
    <property type="molecule type" value="Genomic_DNA"/>
</dbReference>
<dbReference type="EMBL" id="BC101311">
    <property type="protein sequence ID" value="AAI01312.1"/>
    <property type="molecule type" value="mRNA"/>
</dbReference>
<dbReference type="EMBL" id="BC101312">
    <property type="protein sequence ID" value="AAI01313.1"/>
    <property type="molecule type" value="mRNA"/>
</dbReference>
<dbReference type="EMBL" id="BC101313">
    <property type="protein sequence ID" value="AAI01314.1"/>
    <property type="molecule type" value="mRNA"/>
</dbReference>
<dbReference type="CCDS" id="CCDS1922.1"/>
<dbReference type="RefSeq" id="NP_653180.1">
    <property type="nucleotide sequence ID" value="NM_144579.3"/>
</dbReference>
<dbReference type="BioGRID" id="125109">
    <property type="interactions" value="50"/>
</dbReference>
<dbReference type="FunCoup" id="Q8TD22">
    <property type="interactions" value="810"/>
</dbReference>
<dbReference type="IntAct" id="Q8TD22">
    <property type="interactions" value="47"/>
</dbReference>
<dbReference type="STRING" id="9606.ENSP00000272433"/>
<dbReference type="iPTMnet" id="Q8TD22"/>
<dbReference type="PhosphoSitePlus" id="Q8TD22"/>
<dbReference type="BioMuta" id="SFXN5"/>
<dbReference type="DMDM" id="30580506"/>
<dbReference type="jPOST" id="Q8TD22"/>
<dbReference type="MassIVE" id="Q8TD22"/>
<dbReference type="PaxDb" id="9606-ENSP00000272433"/>
<dbReference type="PeptideAtlas" id="Q8TD22"/>
<dbReference type="ProteomicsDB" id="74221"/>
<dbReference type="Pumba" id="Q8TD22"/>
<dbReference type="Antibodypedia" id="16510">
    <property type="antibodies" value="55 antibodies from 16 providers"/>
</dbReference>
<dbReference type="DNASU" id="94097"/>
<dbReference type="Ensembl" id="ENST00000272433.7">
    <property type="protein sequence ID" value="ENSP00000272433.2"/>
    <property type="gene ID" value="ENSG00000144040.13"/>
</dbReference>
<dbReference type="GeneID" id="94097"/>
<dbReference type="KEGG" id="hsa:94097"/>
<dbReference type="MANE-Select" id="ENST00000272433.7">
    <property type="protein sequence ID" value="ENSP00000272433.2"/>
    <property type="RefSeq nucleotide sequence ID" value="NM_144579.3"/>
    <property type="RefSeq protein sequence ID" value="NP_653180.1"/>
</dbReference>
<dbReference type="UCSC" id="uc002siq.3">
    <property type="organism name" value="human"/>
</dbReference>
<dbReference type="AGR" id="HGNC:16073"/>
<dbReference type="CTD" id="94097"/>
<dbReference type="DisGeNET" id="94097"/>
<dbReference type="GeneCards" id="SFXN5"/>
<dbReference type="HGNC" id="HGNC:16073">
    <property type="gene designation" value="SFXN5"/>
</dbReference>
<dbReference type="HPA" id="ENSG00000144040">
    <property type="expression patterns" value="Tissue enhanced (brain, liver)"/>
</dbReference>
<dbReference type="MIM" id="615572">
    <property type="type" value="gene"/>
</dbReference>
<dbReference type="neXtProt" id="NX_Q8TD22"/>
<dbReference type="OpenTargets" id="ENSG00000144040"/>
<dbReference type="PharmGKB" id="PA38088"/>
<dbReference type="VEuPathDB" id="HostDB:ENSG00000144040"/>
<dbReference type="eggNOG" id="KOG3767">
    <property type="taxonomic scope" value="Eukaryota"/>
</dbReference>
<dbReference type="GeneTree" id="ENSGT01030000234641"/>
<dbReference type="HOGENOM" id="CLU_039425_2_1_1"/>
<dbReference type="InParanoid" id="Q8TD22"/>
<dbReference type="OMA" id="GTTIFWQ"/>
<dbReference type="OrthoDB" id="6608471at2759"/>
<dbReference type="PAN-GO" id="Q8TD22">
    <property type="GO annotations" value="4 GO annotations based on evolutionary models"/>
</dbReference>
<dbReference type="PhylomeDB" id="Q8TD22"/>
<dbReference type="TreeFam" id="TF313205"/>
<dbReference type="PathwayCommons" id="Q8TD22"/>
<dbReference type="SignaLink" id="Q8TD22"/>
<dbReference type="BioGRID-ORCS" id="94097">
    <property type="hits" value="9 hits in 1163 CRISPR screens"/>
</dbReference>
<dbReference type="CD-CODE" id="FB4E32DD">
    <property type="entry name" value="Presynaptic clusters and postsynaptic densities"/>
</dbReference>
<dbReference type="ChiTaRS" id="SFXN5">
    <property type="organism name" value="human"/>
</dbReference>
<dbReference type="GenomeRNAi" id="94097"/>
<dbReference type="Pharos" id="Q8TD22">
    <property type="development level" value="Tdark"/>
</dbReference>
<dbReference type="PRO" id="PR:Q8TD22"/>
<dbReference type="Proteomes" id="UP000005640">
    <property type="component" value="Chromosome 2"/>
</dbReference>
<dbReference type="RNAct" id="Q8TD22">
    <property type="molecule type" value="protein"/>
</dbReference>
<dbReference type="Bgee" id="ENSG00000144040">
    <property type="expression patterns" value="Expressed in amygdala and 155 other cell types or tissues"/>
</dbReference>
<dbReference type="ExpressionAtlas" id="Q8TD22">
    <property type="expression patterns" value="baseline and differential"/>
</dbReference>
<dbReference type="GO" id="GO:0005743">
    <property type="term" value="C:mitochondrial inner membrane"/>
    <property type="evidence" value="ECO:0000318"/>
    <property type="project" value="GO_Central"/>
</dbReference>
<dbReference type="GO" id="GO:0005739">
    <property type="term" value="C:mitochondrion"/>
    <property type="evidence" value="ECO:0000314"/>
    <property type="project" value="UniProtKB"/>
</dbReference>
<dbReference type="GO" id="GO:0015137">
    <property type="term" value="F:citrate transmembrane transporter activity"/>
    <property type="evidence" value="ECO:0000318"/>
    <property type="project" value="GO_Central"/>
</dbReference>
<dbReference type="GO" id="GO:0015075">
    <property type="term" value="F:monoatomic ion transmembrane transporter activity"/>
    <property type="evidence" value="ECO:0007669"/>
    <property type="project" value="InterPro"/>
</dbReference>
<dbReference type="GO" id="GO:0006865">
    <property type="term" value="P:amino acid transport"/>
    <property type="evidence" value="ECO:0007669"/>
    <property type="project" value="UniProtKB-KW"/>
</dbReference>
<dbReference type="GO" id="GO:0015746">
    <property type="term" value="P:citrate transport"/>
    <property type="evidence" value="ECO:0000318"/>
    <property type="project" value="GO_Central"/>
</dbReference>
<dbReference type="GO" id="GO:1990542">
    <property type="term" value="P:mitochondrial transmembrane transport"/>
    <property type="evidence" value="ECO:0000318"/>
    <property type="project" value="GO_Central"/>
</dbReference>
<dbReference type="GO" id="GO:0120162">
    <property type="term" value="P:positive regulation of cold-induced thermogenesis"/>
    <property type="evidence" value="ECO:0007669"/>
    <property type="project" value="Ensembl"/>
</dbReference>
<dbReference type="InterPro" id="IPR004686">
    <property type="entry name" value="Mtc"/>
</dbReference>
<dbReference type="NCBIfam" id="TIGR00798">
    <property type="entry name" value="mtc"/>
    <property type="match status" value="1"/>
</dbReference>
<dbReference type="PANTHER" id="PTHR11153">
    <property type="entry name" value="SIDEROFLEXIN"/>
    <property type="match status" value="1"/>
</dbReference>
<dbReference type="PANTHER" id="PTHR11153:SF17">
    <property type="entry name" value="SIDEROFLEXIN-5"/>
    <property type="match status" value="1"/>
</dbReference>
<dbReference type="Pfam" id="PF03820">
    <property type="entry name" value="SFXNs"/>
    <property type="match status" value="1"/>
</dbReference>
<accession>Q8TD22</accession>
<accession>A8K116</accession>
<accession>Q494Y3</accession>
<accession>Q53T29</accession>